<evidence type="ECO:0000250" key="1"/>
<evidence type="ECO:0000250" key="2">
    <source>
        <dbReference type="UniProtKB" id="P04591"/>
    </source>
</evidence>
<evidence type="ECO:0000250" key="3">
    <source>
        <dbReference type="UniProtKB" id="P05893"/>
    </source>
</evidence>
<evidence type="ECO:0000250" key="4">
    <source>
        <dbReference type="UniProtKB" id="P12493"/>
    </source>
</evidence>
<evidence type="ECO:0000255" key="5">
    <source>
        <dbReference type="PROSITE-ProRule" id="PRU00047"/>
    </source>
</evidence>
<evidence type="ECO:0000256" key="6">
    <source>
        <dbReference type="SAM" id="MobiDB-lite"/>
    </source>
</evidence>
<evidence type="ECO:0000305" key="7"/>
<keyword id="KW-0167">Capsid protein</keyword>
<keyword id="KW-1032">Host cell membrane</keyword>
<keyword id="KW-1035">Host cytoplasm</keyword>
<keyword id="KW-1043">Host membrane</keyword>
<keyword id="KW-1048">Host nucleus</keyword>
<keyword id="KW-0945">Host-virus interaction</keyword>
<keyword id="KW-0449">Lipoprotein</keyword>
<keyword id="KW-0472">Membrane</keyword>
<keyword id="KW-0479">Metal-binding</keyword>
<keyword id="KW-0519">Myristate</keyword>
<keyword id="KW-0597">Phosphoprotein</keyword>
<keyword id="KW-1185">Reference proteome</keyword>
<keyword id="KW-0677">Repeat</keyword>
<keyword id="KW-0688">Ribosomal frameshifting</keyword>
<keyword id="KW-0694">RNA-binding</keyword>
<keyword id="KW-1198">Viral budding</keyword>
<keyword id="KW-1187">Viral budding via the host ESCRT complexes</keyword>
<keyword id="KW-0543">Viral nucleoprotein</keyword>
<keyword id="KW-1188">Viral release from host cell</keyword>
<keyword id="KW-0946">Virion</keyword>
<keyword id="KW-0862">Zinc</keyword>
<keyword id="KW-0863">Zinc-finger</keyword>
<sequence>MGARASVLTGGKLDQWEKIYLRPGGKKKYMMKHLVWASRELERFACNPGLMDTAEGCAQLLRQLEPALKTGSEGLRSLFNTLAVLYCVHNNIKVQNTQEALEKLREKMKAEQKEPEPEQAAGAAAAPESSISRNYPLVQNAQGQMVHQPLSPRTLNAWVKVVEEKAFNPEVIPMFMALSEGATPQDLNTMLNTVGGHQAAMQMLKEVINEEAAEWDRGHPVHMGPIPPGQVREPRGSDIAGTTSTLAEQVAWMTANPPVPVGDIYRRWIVLGLNKIVRMYSPASILDIKQGPKETFRDYVDRFYKTLRAEQATQEVKNWMTETLLVQNANPDCKNILRALGPGASLEEMMTACQGVGGPAHKARVLAEAMTQAQTATSVFMQRGNFKGIRKTIKCFNCGKEGHLARNCKAPRKKGCWKCGQEGHQMKDCRSGERQANFLGKVWPLSKGRPGNFPQTTTRKEPTAPPIESYGYQEEKTTQGTEREEKEKTESSLYPPLTSLKSLFGSDPSLQ</sequence>
<reference key="1">
    <citation type="journal article" date="2006" name="Science">
        <title>Chimpanzee reservoirs of pandemic and nonpandemic HIV-1.</title>
        <authorList>
            <person name="Keele B.F."/>
            <person name="Van Heuverswyn F."/>
            <person name="Li Y."/>
            <person name="Bailes E."/>
            <person name="Takehisa J."/>
            <person name="Santiago M.L."/>
            <person name="Bibollet-Ruche F."/>
            <person name="Chen Y."/>
            <person name="Wain L.V."/>
            <person name="Liegeois F."/>
            <person name="Loul S."/>
            <person name="Ngole E.M."/>
            <person name="Bienvenue Y."/>
            <person name="Delaporte E."/>
            <person name="Brookfield J.F."/>
            <person name="Sharp P.M."/>
            <person name="Shaw G.M."/>
            <person name="Peeters M."/>
            <person name="Hahn B.H."/>
        </authorList>
    </citation>
    <scope>NUCLEOTIDE SEQUENCE [GENOMIC RNA]</scope>
</reference>
<protein>
    <recommendedName>
        <fullName>Gag polyprotein</fullName>
    </recommendedName>
    <alternativeName>
        <fullName>Pr55Gag</fullName>
    </alternativeName>
    <component>
        <recommendedName>
            <fullName>Matrix protein p17</fullName>
            <shortName>MA</shortName>
        </recommendedName>
    </component>
    <component>
        <recommendedName>
            <fullName>Capsid protein p24</fullName>
            <shortName>CA</shortName>
        </recommendedName>
    </component>
    <component>
        <recommendedName>
            <fullName>Spacer peptide p2</fullName>
        </recommendedName>
    </component>
    <component>
        <recommendedName>
            <fullName>Nucleocapsid protein p7</fullName>
            <shortName>NC</shortName>
        </recommendedName>
    </component>
    <component>
        <recommendedName>
            <fullName>Spacer peptide p1</fullName>
        </recommendedName>
    </component>
    <component>
        <recommendedName>
            <fullName>p6-gag</fullName>
        </recommendedName>
    </component>
</protein>
<feature type="initiator methionine" description="Removed; by host" evidence="1">
    <location>
        <position position="1"/>
    </location>
</feature>
<feature type="chain" id="PRO_0000261252" description="Gag polyprotein">
    <location>
        <begin position="2"/>
        <end position="511"/>
    </location>
</feature>
<feature type="chain" id="PRO_0000249357" description="Matrix protein p17" evidence="1">
    <location>
        <begin position="2"/>
        <end position="135"/>
    </location>
</feature>
<feature type="chain" id="PRO_0000249358" description="Capsid protein p24" evidence="1">
    <location>
        <begin position="136"/>
        <end position="366"/>
    </location>
</feature>
<feature type="peptide" id="PRO_0000249359" description="Spacer peptide p2" evidence="1">
    <location>
        <begin position="367"/>
        <end position="380"/>
    </location>
</feature>
<feature type="chain" id="PRO_0000249360" description="Nucleocapsid protein p7" evidence="1">
    <location>
        <begin position="381"/>
        <end position="437"/>
    </location>
</feature>
<feature type="peptide" id="PRO_0000249361" description="Spacer peptide p1" evidence="1">
    <location>
        <begin position="438"/>
        <end position="453"/>
    </location>
</feature>
<feature type="chain" id="PRO_0000249362" description="p6-gag" evidence="1">
    <location>
        <begin position="454"/>
        <end position="511"/>
    </location>
</feature>
<feature type="zinc finger region" description="CCHC-type 1" evidence="5">
    <location>
        <begin position="393"/>
        <end position="410"/>
    </location>
</feature>
<feature type="zinc finger region" description="CCHC-type 2" evidence="5">
    <location>
        <begin position="414"/>
        <end position="431"/>
    </location>
</feature>
<feature type="region of interest" description="Disordered" evidence="6">
    <location>
        <begin position="107"/>
        <end position="129"/>
    </location>
</feature>
<feature type="region of interest" description="Disordered" evidence="6">
    <location>
        <begin position="443"/>
        <end position="511"/>
    </location>
</feature>
<feature type="short sequence motif" description="Nuclear export signal" evidence="1">
    <location>
        <begin position="16"/>
        <end position="22"/>
    </location>
</feature>
<feature type="short sequence motif" description="Nuclear localization signal" evidence="1">
    <location>
        <begin position="26"/>
        <end position="32"/>
    </location>
</feature>
<feature type="short sequence motif" description="PTAP/PSAP motif" evidence="3">
    <location>
        <begin position="462"/>
        <end position="465"/>
    </location>
</feature>
<feature type="short sequence motif" description="LYPX(n)L motif">
    <location>
        <begin position="493"/>
        <end position="503"/>
    </location>
</feature>
<feature type="compositionally biased region" description="Basic and acidic residues" evidence="6">
    <location>
        <begin position="107"/>
        <end position="116"/>
    </location>
</feature>
<feature type="compositionally biased region" description="Low complexity" evidence="6">
    <location>
        <begin position="118"/>
        <end position="128"/>
    </location>
</feature>
<feature type="compositionally biased region" description="Basic and acidic residues" evidence="6">
    <location>
        <begin position="473"/>
        <end position="490"/>
    </location>
</feature>
<feature type="site" description="Cleavage; by viral protease" evidence="1">
    <location>
        <begin position="135"/>
        <end position="136"/>
    </location>
</feature>
<feature type="site" description="Cleavage; by viral protease" evidence="1">
    <location>
        <begin position="366"/>
        <end position="367"/>
    </location>
</feature>
<feature type="site" description="Cleavage; by viral protease" evidence="1">
    <location>
        <begin position="380"/>
        <end position="381"/>
    </location>
</feature>
<feature type="site" description="Cleavage; by viral protease" evidence="1">
    <location>
        <begin position="437"/>
        <end position="438"/>
    </location>
</feature>
<feature type="site" description="Cleavage; by viral protease" evidence="1">
    <location>
        <begin position="453"/>
        <end position="454"/>
    </location>
</feature>
<feature type="lipid moiety-binding region" description="N-myristoyl glycine; by host" evidence="1">
    <location>
        <position position="2"/>
    </location>
</feature>
<dbReference type="EMBL" id="DQ373065">
    <property type="protein sequence ID" value="ABD19492.1"/>
    <property type="molecule type" value="Genomic_RNA"/>
</dbReference>
<dbReference type="SMR" id="Q1A250"/>
<dbReference type="PRO" id="PR:Q1A250"/>
<dbReference type="Proteomes" id="UP000008436">
    <property type="component" value="Segment"/>
</dbReference>
<dbReference type="GO" id="GO:0030430">
    <property type="term" value="C:host cell cytoplasm"/>
    <property type="evidence" value="ECO:0007669"/>
    <property type="project" value="UniProtKB-SubCell"/>
</dbReference>
<dbReference type="GO" id="GO:0042025">
    <property type="term" value="C:host cell nucleus"/>
    <property type="evidence" value="ECO:0007669"/>
    <property type="project" value="UniProtKB-SubCell"/>
</dbReference>
<dbReference type="GO" id="GO:0020002">
    <property type="term" value="C:host cell plasma membrane"/>
    <property type="evidence" value="ECO:0007669"/>
    <property type="project" value="UniProtKB-SubCell"/>
</dbReference>
<dbReference type="GO" id="GO:0016020">
    <property type="term" value="C:membrane"/>
    <property type="evidence" value="ECO:0007669"/>
    <property type="project" value="UniProtKB-KW"/>
</dbReference>
<dbReference type="GO" id="GO:0019013">
    <property type="term" value="C:viral nucleocapsid"/>
    <property type="evidence" value="ECO:0007669"/>
    <property type="project" value="UniProtKB-KW"/>
</dbReference>
<dbReference type="GO" id="GO:0003723">
    <property type="term" value="F:RNA binding"/>
    <property type="evidence" value="ECO:0007669"/>
    <property type="project" value="UniProtKB-KW"/>
</dbReference>
<dbReference type="GO" id="GO:0005198">
    <property type="term" value="F:structural molecule activity"/>
    <property type="evidence" value="ECO:0007669"/>
    <property type="project" value="InterPro"/>
</dbReference>
<dbReference type="GO" id="GO:0008270">
    <property type="term" value="F:zinc ion binding"/>
    <property type="evidence" value="ECO:0007669"/>
    <property type="project" value="UniProtKB-KW"/>
</dbReference>
<dbReference type="GO" id="GO:0039702">
    <property type="term" value="P:viral budding via host ESCRT complex"/>
    <property type="evidence" value="ECO:0007669"/>
    <property type="project" value="UniProtKB-KW"/>
</dbReference>
<dbReference type="GO" id="GO:0075523">
    <property type="term" value="P:viral translational frameshifting"/>
    <property type="evidence" value="ECO:0007669"/>
    <property type="project" value="UniProtKB-KW"/>
</dbReference>
<dbReference type="FunFam" id="1.10.1200.30:FF:000001">
    <property type="entry name" value="Gag polyprotein"/>
    <property type="match status" value="1"/>
</dbReference>
<dbReference type="Gene3D" id="1.10.1200.30">
    <property type="match status" value="1"/>
</dbReference>
<dbReference type="Gene3D" id="6.10.250.390">
    <property type="match status" value="1"/>
</dbReference>
<dbReference type="Gene3D" id="1.10.375.10">
    <property type="entry name" value="Human Immunodeficiency Virus Type 1 Capsid Protein"/>
    <property type="match status" value="1"/>
</dbReference>
<dbReference type="Gene3D" id="1.10.150.90">
    <property type="entry name" value="Immunodeficiency lentiviruses, gag gene matrix protein p17"/>
    <property type="match status" value="1"/>
</dbReference>
<dbReference type="Gene3D" id="1.20.5.760">
    <property type="entry name" value="Single helix bin"/>
    <property type="match status" value="1"/>
</dbReference>
<dbReference type="Gene3D" id="4.10.60.10">
    <property type="entry name" value="Zinc finger, CCHC-type"/>
    <property type="match status" value="1"/>
</dbReference>
<dbReference type="InterPro" id="IPR045345">
    <property type="entry name" value="Gag_p24_C"/>
</dbReference>
<dbReference type="InterPro" id="IPR014817">
    <property type="entry name" value="Gag_p6"/>
</dbReference>
<dbReference type="InterPro" id="IPR000071">
    <property type="entry name" value="Lentvrl_matrix_N"/>
</dbReference>
<dbReference type="InterPro" id="IPR012344">
    <property type="entry name" value="Matrix_HIV/RSV_N"/>
</dbReference>
<dbReference type="InterPro" id="IPR050195">
    <property type="entry name" value="Primate_lentivir_Gag_pol-like"/>
</dbReference>
<dbReference type="InterPro" id="IPR008916">
    <property type="entry name" value="Retrov_capsid_C"/>
</dbReference>
<dbReference type="InterPro" id="IPR008919">
    <property type="entry name" value="Retrov_capsid_N"/>
</dbReference>
<dbReference type="InterPro" id="IPR010999">
    <property type="entry name" value="Retrovr_matrix"/>
</dbReference>
<dbReference type="InterPro" id="IPR001878">
    <property type="entry name" value="Znf_CCHC"/>
</dbReference>
<dbReference type="InterPro" id="IPR036875">
    <property type="entry name" value="Znf_CCHC_sf"/>
</dbReference>
<dbReference type="PANTHER" id="PTHR40389">
    <property type="entry name" value="ENDOGENOUS RETROVIRUS GROUP K MEMBER 24 GAG POLYPROTEIN-RELATED"/>
    <property type="match status" value="1"/>
</dbReference>
<dbReference type="PANTHER" id="PTHR40389:SF3">
    <property type="entry name" value="IGE-BINDING PROTEIN"/>
    <property type="match status" value="1"/>
</dbReference>
<dbReference type="Pfam" id="PF00540">
    <property type="entry name" value="Gag_p17"/>
    <property type="match status" value="1"/>
</dbReference>
<dbReference type="Pfam" id="PF00607">
    <property type="entry name" value="Gag_p24"/>
    <property type="match status" value="1"/>
</dbReference>
<dbReference type="Pfam" id="PF19317">
    <property type="entry name" value="Gag_p24_C"/>
    <property type="match status" value="1"/>
</dbReference>
<dbReference type="Pfam" id="PF08705">
    <property type="entry name" value="Gag_p6"/>
    <property type="match status" value="1"/>
</dbReference>
<dbReference type="Pfam" id="PF00098">
    <property type="entry name" value="zf-CCHC"/>
    <property type="match status" value="2"/>
</dbReference>
<dbReference type="PRINTS" id="PR00234">
    <property type="entry name" value="HIV1MATRIX"/>
</dbReference>
<dbReference type="SMART" id="SM00343">
    <property type="entry name" value="ZnF_C2HC"/>
    <property type="match status" value="2"/>
</dbReference>
<dbReference type="SUPFAM" id="SSF47836">
    <property type="entry name" value="Retroviral matrix proteins"/>
    <property type="match status" value="1"/>
</dbReference>
<dbReference type="SUPFAM" id="SSF47353">
    <property type="entry name" value="Retrovirus capsid dimerization domain-like"/>
    <property type="match status" value="1"/>
</dbReference>
<dbReference type="SUPFAM" id="SSF47943">
    <property type="entry name" value="Retrovirus capsid protein, N-terminal core domain"/>
    <property type="match status" value="1"/>
</dbReference>
<dbReference type="SUPFAM" id="SSF57756">
    <property type="entry name" value="Retrovirus zinc finger-like domains"/>
    <property type="match status" value="1"/>
</dbReference>
<dbReference type="PROSITE" id="PS50158">
    <property type="entry name" value="ZF_CCHC"/>
    <property type="match status" value="2"/>
</dbReference>
<proteinExistence type="inferred from homology"/>
<organismHost>
    <name type="scientific">Pan troglodytes</name>
    <name type="common">Chimpanzee</name>
    <dbReference type="NCBI Taxonomy" id="9598"/>
</organismHost>
<organism>
    <name type="scientific">Simian immunodeficiency virus (isolate EK505)</name>
    <name type="common">SIV-cpz</name>
    <name type="synonym">Chimpanzee immunodeficiency virus</name>
    <dbReference type="NCBI Taxonomy" id="388912"/>
    <lineage>
        <taxon>Viruses</taxon>
        <taxon>Riboviria</taxon>
        <taxon>Pararnavirae</taxon>
        <taxon>Artverviricota</taxon>
        <taxon>Revtraviricetes</taxon>
        <taxon>Ortervirales</taxon>
        <taxon>Retroviridae</taxon>
        <taxon>Orthoretrovirinae</taxon>
        <taxon>Lentivirus</taxon>
        <taxon>Simian immunodeficiency virus</taxon>
    </lineage>
</organism>
<name>GAG_SIVEK</name>
<accession>Q1A250</accession>
<comment type="function">
    <text evidence="1">Matrix protein p17 targets Gag and Gag-Pol polyproteins to the plasma membrane via a multipartite membrane binding signal, that includes its myristoylated N-terminus. Also mediates nuclear localization of the preintegration complex. Implicated in the release from host cell mediated by Vpu (By similarity).</text>
</comment>
<comment type="function">
    <text evidence="1">Capsid protein p24 forms the conical core of the virus that encapsulates the genomic RNA-nucleocapsid complex.</text>
</comment>
<comment type="function">
    <text evidence="1">Nucleocapsid protein p7 encapsulates and protects viral dimeric unspliced (genomic) RNA. Binds these RNAs through its zinc fingers (By similarity).</text>
</comment>
<comment type="function">
    <text evidence="1">p6-gag plays a role in budding of the assembled particle by interacting with the host class E VPS proteins TSG101 and PDCD6IP/AIP1.</text>
</comment>
<comment type="subunit">
    <molecule>Matrix protein p17</molecule>
    <text evidence="2 4">Homotrimer. Interacts with gp41 (via C-terminus).</text>
</comment>
<comment type="subunit">
    <molecule>p6-gag</molecule>
    <text evidence="4">Interacts with host TSG101 (By similarity).</text>
</comment>
<comment type="subcellular location">
    <molecule>Matrix protein p17</molecule>
    <subcellularLocation>
        <location evidence="7">Virion</location>
    </subcellularLocation>
    <subcellularLocation>
        <location evidence="1">Host nucleus</location>
    </subcellularLocation>
    <subcellularLocation>
        <location evidence="1">Host cytoplasm</location>
    </subcellularLocation>
    <subcellularLocation>
        <location evidence="7">Host cell membrane</location>
        <topology evidence="7">Lipid-anchor</topology>
    </subcellularLocation>
    <text evidence="1">Following virus entry, the nuclear localization signal (NLS) of the matrix protein participates with Vpr to the nuclear localization of the viral genome. During virus production, the nuclear export activity of the matrix protein counteracts the NLS to maintain the Gag and Gag-Pol polyproteins in the cytoplasm, thereby directing unspliced RNA to the plasma membrane (By similarity).</text>
</comment>
<comment type="subcellular location">
    <molecule>Capsid protein p24</molecule>
    <subcellularLocation>
        <location evidence="7">Virion</location>
    </subcellularLocation>
</comment>
<comment type="subcellular location">
    <molecule>Nucleocapsid protein p7</molecule>
    <subcellularLocation>
        <location evidence="7">Virion</location>
    </subcellularLocation>
</comment>
<comment type="alternative products">
    <event type="ribosomal frameshifting"/>
    <isoform>
        <id>Q1A250-1</id>
        <name>Gag polyprotein</name>
        <sequence type="displayed"/>
    </isoform>
    <isoform>
        <id>Q1A249-1</id>
        <name>Gag-Pol polyprotein</name>
        <sequence type="external"/>
    </isoform>
    <text>Translation results in the formation of the Gag polyprotein most of the time. Ribosomal frameshifting at the gag-pol genes boundary occurs at low frequency and produces the Gag-Pol polyprotein. This strategy of translation probably allows the virus to modulate the quantity of each viral protein. Maintenance of a correct Gag to Gag-Pol ratio is essential for RNA dimerization and viral infectivity.</text>
</comment>
<comment type="domain">
    <text evidence="3">Late-budding domains (L domains) are short sequence motifs essential for viral particle budding. They recruit proteins of the host ESCRT machinery (Endosomal Sorting Complex Required for Transport) or ESCRT-associated proteins. p6-gag contains one L domain: a PTAP/PSAP motif, which interacts with the UEV domain of TSG101.</text>
</comment>
<comment type="PTM">
    <text evidence="1">Capsid protein p24 is phosphorylated.</text>
</comment>
<comment type="PTM">
    <text evidence="1">Specific enzymatic cleavages by the viral protease yield mature proteins. The polyprotein is cleaved during and after budding, this process is termed maturation (By similarity).</text>
</comment>
<comment type="miscellaneous">
    <molecule>Isoform Gag polyprotein</molecule>
    <text>Produced by conventional translation.</text>
</comment>
<comment type="similarity">
    <text evidence="7">Belongs to the primate lentivirus group gag polyprotein family.</text>
</comment>
<gene>
    <name type="primary">gag</name>
</gene>